<name>GLPG_YERPY</name>
<gene>
    <name evidence="1" type="primary">glpG</name>
    <name type="ordered locus">YPK_0158</name>
</gene>
<organism>
    <name type="scientific">Yersinia pseudotuberculosis serotype O:3 (strain YPIII)</name>
    <dbReference type="NCBI Taxonomy" id="502800"/>
    <lineage>
        <taxon>Bacteria</taxon>
        <taxon>Pseudomonadati</taxon>
        <taxon>Pseudomonadota</taxon>
        <taxon>Gammaproteobacteria</taxon>
        <taxon>Enterobacterales</taxon>
        <taxon>Yersiniaceae</taxon>
        <taxon>Yersinia</taxon>
    </lineage>
</organism>
<keyword id="KW-0997">Cell inner membrane</keyword>
<keyword id="KW-1003">Cell membrane</keyword>
<keyword id="KW-0378">Hydrolase</keyword>
<keyword id="KW-0472">Membrane</keyword>
<keyword id="KW-0645">Protease</keyword>
<keyword id="KW-0720">Serine protease</keyword>
<keyword id="KW-0812">Transmembrane</keyword>
<keyword id="KW-1133">Transmembrane helix</keyword>
<feature type="chain" id="PRO_1000147870" description="Rhomboid protease GlpG">
    <location>
        <begin position="1"/>
        <end position="278"/>
    </location>
</feature>
<feature type="transmembrane region" description="Helical" evidence="1">
    <location>
        <begin position="94"/>
        <end position="114"/>
    </location>
</feature>
<feature type="transmembrane region" description="Helical" evidence="1">
    <location>
        <begin position="143"/>
        <end position="163"/>
    </location>
</feature>
<feature type="transmembrane region" description="Helical" evidence="1">
    <location>
        <begin position="175"/>
        <end position="195"/>
    </location>
</feature>
<feature type="transmembrane region" description="Helical" evidence="1">
    <location>
        <begin position="196"/>
        <end position="216"/>
    </location>
</feature>
<feature type="transmembrane region" description="Helical" evidence="1">
    <location>
        <begin position="230"/>
        <end position="250"/>
    </location>
</feature>
<feature type="active site" description="Nucleophile" evidence="1">
    <location>
        <position position="202"/>
    </location>
</feature>
<feature type="active site" evidence="1">
    <location>
        <position position="255"/>
    </location>
</feature>
<protein>
    <recommendedName>
        <fullName evidence="1">Rhomboid protease GlpG</fullName>
        <ecNumber evidence="1">3.4.21.105</ecNumber>
    </recommendedName>
    <alternativeName>
        <fullName evidence="1">Intramembrane serine protease</fullName>
    </alternativeName>
</protein>
<evidence type="ECO:0000255" key="1">
    <source>
        <dbReference type="HAMAP-Rule" id="MF_01594"/>
    </source>
</evidence>
<dbReference type="EC" id="3.4.21.105" evidence="1"/>
<dbReference type="EMBL" id="CP000950">
    <property type="protein sequence ID" value="ACA66471.1"/>
    <property type="molecule type" value="Genomic_DNA"/>
</dbReference>
<dbReference type="RefSeq" id="WP_002216348.1">
    <property type="nucleotide sequence ID" value="NZ_CP009792.1"/>
</dbReference>
<dbReference type="SMR" id="B1JHY8"/>
<dbReference type="MEROPS" id="S54.016"/>
<dbReference type="GeneID" id="57974477"/>
<dbReference type="KEGG" id="ypy:YPK_0158"/>
<dbReference type="PATRIC" id="fig|502800.11.peg.764"/>
<dbReference type="GO" id="GO:0005886">
    <property type="term" value="C:plasma membrane"/>
    <property type="evidence" value="ECO:0007669"/>
    <property type="project" value="UniProtKB-SubCell"/>
</dbReference>
<dbReference type="GO" id="GO:0004252">
    <property type="term" value="F:serine-type endopeptidase activity"/>
    <property type="evidence" value="ECO:0007669"/>
    <property type="project" value="UniProtKB-UniRule"/>
</dbReference>
<dbReference type="GO" id="GO:0006508">
    <property type="term" value="P:proteolysis"/>
    <property type="evidence" value="ECO:0007669"/>
    <property type="project" value="UniProtKB-UniRule"/>
</dbReference>
<dbReference type="Gene3D" id="3.30.70.2350">
    <property type="match status" value="1"/>
</dbReference>
<dbReference type="Gene3D" id="1.20.1540.10">
    <property type="entry name" value="Rhomboid-like"/>
    <property type="match status" value="1"/>
</dbReference>
<dbReference type="HAMAP" id="MF_01594">
    <property type="entry name" value="Rhomboid_GlpG"/>
    <property type="match status" value="1"/>
</dbReference>
<dbReference type="InterPro" id="IPR038236">
    <property type="entry name" value="GlpG_N_sf"/>
</dbReference>
<dbReference type="InterPro" id="IPR022732">
    <property type="entry name" value="Peptidase_S54_GlpG_N"/>
</dbReference>
<dbReference type="InterPro" id="IPR022764">
    <property type="entry name" value="Peptidase_S54_rhomboid_dom"/>
</dbReference>
<dbReference type="InterPro" id="IPR035952">
    <property type="entry name" value="Rhomboid-like_sf"/>
</dbReference>
<dbReference type="InterPro" id="IPR023662">
    <property type="entry name" value="Rhomboid_protease_GlpG"/>
</dbReference>
<dbReference type="NCBIfam" id="NF008155">
    <property type="entry name" value="PRK10907.1"/>
    <property type="match status" value="1"/>
</dbReference>
<dbReference type="NCBIfam" id="TIGR04239">
    <property type="entry name" value="rhombo_GlpG"/>
    <property type="match status" value="1"/>
</dbReference>
<dbReference type="PANTHER" id="PTHR43066:SF26">
    <property type="entry name" value="RHOMBOID PROTEASE GLPG"/>
    <property type="match status" value="1"/>
</dbReference>
<dbReference type="PANTHER" id="PTHR43066">
    <property type="entry name" value="RHOMBOID-RELATED PROTEIN"/>
    <property type="match status" value="1"/>
</dbReference>
<dbReference type="Pfam" id="PF01694">
    <property type="entry name" value="Rhomboid"/>
    <property type="match status" value="1"/>
</dbReference>
<dbReference type="Pfam" id="PF12122">
    <property type="entry name" value="Rhomboid_N"/>
    <property type="match status" value="1"/>
</dbReference>
<dbReference type="SUPFAM" id="SSF144091">
    <property type="entry name" value="Rhomboid-like"/>
    <property type="match status" value="1"/>
</dbReference>
<comment type="function">
    <text evidence="1">Rhomboid-type serine protease that catalyzes intramembrane proteolysis.</text>
</comment>
<comment type="catalytic activity">
    <reaction evidence="1">
        <text>Cleaves type-1 transmembrane domains using a catalytic dyad composed of serine and histidine that are contributed by different transmembrane domains.</text>
        <dbReference type="EC" id="3.4.21.105"/>
    </reaction>
</comment>
<comment type="subcellular location">
    <subcellularLocation>
        <location evidence="1">Cell inner membrane</location>
        <topology evidence="1">Multi-pass membrane protein</topology>
    </subcellularLocation>
</comment>
<comment type="similarity">
    <text evidence="1">Belongs to the peptidase S54 family.</text>
</comment>
<sequence length="278" mass="31305">MTRVIVISNLRLAQAFVDYMATHHVALEIRPDAQGVEIWLADDEQLSAVQHELEQFLLDPLNPRYQAASWQAGNVNSNLPYQRFSYLQTLRSQAGPLTLSVMVLCIAIYILMLITGDMAVMSWLAWPYNSSQYLQIWRWVSHAFLHFSLLHILFNLMWWWYLGGQMEKRLGTSKLLVLTIVSAVFSGWGQSLFSGANFGGLSGVVYALMGYVWLTGERAPERGISLPRGLMAFSVLWLIAGYFDILGLSIANAAHVSGLIIGLLMAFWDTRNSARTVQ</sequence>
<proteinExistence type="inferred from homology"/>
<accession>B1JHY8</accession>
<reference key="1">
    <citation type="submission" date="2008-02" db="EMBL/GenBank/DDBJ databases">
        <title>Complete sequence of Yersinia pseudotuberculosis YPIII.</title>
        <authorList>
            <consortium name="US DOE Joint Genome Institute"/>
            <person name="Copeland A."/>
            <person name="Lucas S."/>
            <person name="Lapidus A."/>
            <person name="Glavina del Rio T."/>
            <person name="Dalin E."/>
            <person name="Tice H."/>
            <person name="Bruce D."/>
            <person name="Goodwin L."/>
            <person name="Pitluck S."/>
            <person name="Munk A.C."/>
            <person name="Brettin T."/>
            <person name="Detter J.C."/>
            <person name="Han C."/>
            <person name="Tapia R."/>
            <person name="Schmutz J."/>
            <person name="Larimer F."/>
            <person name="Land M."/>
            <person name="Hauser L."/>
            <person name="Challacombe J.F."/>
            <person name="Green L."/>
            <person name="Lindler L.E."/>
            <person name="Nikolich M.P."/>
            <person name="Richardson P."/>
        </authorList>
    </citation>
    <scope>NUCLEOTIDE SEQUENCE [LARGE SCALE GENOMIC DNA]</scope>
    <source>
        <strain>YPIII</strain>
    </source>
</reference>